<dbReference type="EMBL" id="CP000446">
    <property type="protein sequence ID" value="ABI39803.1"/>
    <property type="molecule type" value="Genomic_DNA"/>
</dbReference>
<dbReference type="RefSeq" id="WP_011623483.1">
    <property type="nucleotide sequence ID" value="NC_008321.1"/>
</dbReference>
<dbReference type="SMR" id="Q0HGL4"/>
<dbReference type="KEGG" id="she:Shewmr4_2732"/>
<dbReference type="HOGENOM" id="CLU_057217_6_0_6"/>
<dbReference type="GO" id="GO:0005829">
    <property type="term" value="C:cytosol"/>
    <property type="evidence" value="ECO:0007669"/>
    <property type="project" value="TreeGrafter"/>
</dbReference>
<dbReference type="GO" id="GO:0000774">
    <property type="term" value="F:adenyl-nucleotide exchange factor activity"/>
    <property type="evidence" value="ECO:0007669"/>
    <property type="project" value="InterPro"/>
</dbReference>
<dbReference type="GO" id="GO:0042803">
    <property type="term" value="F:protein homodimerization activity"/>
    <property type="evidence" value="ECO:0007669"/>
    <property type="project" value="InterPro"/>
</dbReference>
<dbReference type="GO" id="GO:0051087">
    <property type="term" value="F:protein-folding chaperone binding"/>
    <property type="evidence" value="ECO:0007669"/>
    <property type="project" value="InterPro"/>
</dbReference>
<dbReference type="GO" id="GO:0051082">
    <property type="term" value="F:unfolded protein binding"/>
    <property type="evidence" value="ECO:0007669"/>
    <property type="project" value="TreeGrafter"/>
</dbReference>
<dbReference type="GO" id="GO:0006457">
    <property type="term" value="P:protein folding"/>
    <property type="evidence" value="ECO:0007669"/>
    <property type="project" value="InterPro"/>
</dbReference>
<dbReference type="CDD" id="cd00446">
    <property type="entry name" value="GrpE"/>
    <property type="match status" value="1"/>
</dbReference>
<dbReference type="FunFam" id="2.30.22.10:FF:000001">
    <property type="entry name" value="Protein GrpE"/>
    <property type="match status" value="1"/>
</dbReference>
<dbReference type="Gene3D" id="3.90.20.20">
    <property type="match status" value="1"/>
</dbReference>
<dbReference type="Gene3D" id="2.30.22.10">
    <property type="entry name" value="Head domain of nucleotide exchange factor GrpE"/>
    <property type="match status" value="1"/>
</dbReference>
<dbReference type="HAMAP" id="MF_01151">
    <property type="entry name" value="GrpE"/>
    <property type="match status" value="1"/>
</dbReference>
<dbReference type="InterPro" id="IPR000740">
    <property type="entry name" value="GrpE"/>
</dbReference>
<dbReference type="InterPro" id="IPR013805">
    <property type="entry name" value="GrpE_coiled_coil"/>
</dbReference>
<dbReference type="InterPro" id="IPR009012">
    <property type="entry name" value="GrpE_head"/>
</dbReference>
<dbReference type="NCBIfam" id="NF010737">
    <property type="entry name" value="PRK14139.1"/>
    <property type="match status" value="1"/>
</dbReference>
<dbReference type="NCBIfam" id="NF010738">
    <property type="entry name" value="PRK14140.1"/>
    <property type="match status" value="1"/>
</dbReference>
<dbReference type="NCBIfam" id="NF010748">
    <property type="entry name" value="PRK14150.1"/>
    <property type="match status" value="1"/>
</dbReference>
<dbReference type="PANTHER" id="PTHR21237">
    <property type="entry name" value="GRPE PROTEIN"/>
    <property type="match status" value="1"/>
</dbReference>
<dbReference type="PANTHER" id="PTHR21237:SF23">
    <property type="entry name" value="GRPE PROTEIN HOMOLOG, MITOCHONDRIAL"/>
    <property type="match status" value="1"/>
</dbReference>
<dbReference type="Pfam" id="PF01025">
    <property type="entry name" value="GrpE"/>
    <property type="match status" value="1"/>
</dbReference>
<dbReference type="PRINTS" id="PR00773">
    <property type="entry name" value="GRPEPROTEIN"/>
</dbReference>
<dbReference type="SUPFAM" id="SSF58014">
    <property type="entry name" value="Coiled-coil domain of nucleotide exchange factor GrpE"/>
    <property type="match status" value="1"/>
</dbReference>
<dbReference type="SUPFAM" id="SSF51064">
    <property type="entry name" value="Head domain of nucleotide exchange factor GrpE"/>
    <property type="match status" value="1"/>
</dbReference>
<dbReference type="PROSITE" id="PS01071">
    <property type="entry name" value="GRPE"/>
    <property type="match status" value="1"/>
</dbReference>
<reference key="1">
    <citation type="submission" date="2006-08" db="EMBL/GenBank/DDBJ databases">
        <title>Complete sequence of Shewanella sp. MR-4.</title>
        <authorList>
            <consortium name="US DOE Joint Genome Institute"/>
            <person name="Copeland A."/>
            <person name="Lucas S."/>
            <person name="Lapidus A."/>
            <person name="Barry K."/>
            <person name="Detter J.C."/>
            <person name="Glavina del Rio T."/>
            <person name="Hammon N."/>
            <person name="Israni S."/>
            <person name="Dalin E."/>
            <person name="Tice H."/>
            <person name="Pitluck S."/>
            <person name="Kiss H."/>
            <person name="Brettin T."/>
            <person name="Bruce D."/>
            <person name="Han C."/>
            <person name="Tapia R."/>
            <person name="Gilna P."/>
            <person name="Schmutz J."/>
            <person name="Larimer F."/>
            <person name="Land M."/>
            <person name="Hauser L."/>
            <person name="Kyrpides N."/>
            <person name="Mikhailova N."/>
            <person name="Nealson K."/>
            <person name="Konstantinidis K."/>
            <person name="Klappenbach J."/>
            <person name="Tiedje J."/>
            <person name="Richardson P."/>
        </authorList>
    </citation>
    <scope>NUCLEOTIDE SEQUENCE [LARGE SCALE GENOMIC DNA]</scope>
    <source>
        <strain>MR-4</strain>
    </source>
</reference>
<comment type="function">
    <text evidence="1">Participates actively in the response to hyperosmotic and heat shock by preventing the aggregation of stress-denatured proteins, in association with DnaK and GrpE. It is the nucleotide exchange factor for DnaK and may function as a thermosensor. Unfolded proteins bind initially to DnaJ; upon interaction with the DnaJ-bound protein, DnaK hydrolyzes its bound ATP, resulting in the formation of a stable complex. GrpE releases ADP from DnaK; ATP binding to DnaK triggers the release of the substrate protein, thus completing the reaction cycle. Several rounds of ATP-dependent interactions between DnaJ, DnaK and GrpE are required for fully efficient folding.</text>
</comment>
<comment type="subunit">
    <text evidence="1">Homodimer.</text>
</comment>
<comment type="subcellular location">
    <subcellularLocation>
        <location evidence="1">Cytoplasm</location>
    </subcellularLocation>
</comment>
<comment type="similarity">
    <text evidence="1">Belongs to the GrpE family.</text>
</comment>
<keyword id="KW-0143">Chaperone</keyword>
<keyword id="KW-0963">Cytoplasm</keyword>
<keyword id="KW-0346">Stress response</keyword>
<protein>
    <recommendedName>
        <fullName evidence="1">Protein GrpE</fullName>
    </recommendedName>
    <alternativeName>
        <fullName evidence="1">HSP-70 cofactor</fullName>
    </alternativeName>
</protein>
<organism>
    <name type="scientific">Shewanella sp. (strain MR-4)</name>
    <dbReference type="NCBI Taxonomy" id="60480"/>
    <lineage>
        <taxon>Bacteria</taxon>
        <taxon>Pseudomonadati</taxon>
        <taxon>Pseudomonadota</taxon>
        <taxon>Gammaproteobacteria</taxon>
        <taxon>Alteromonadales</taxon>
        <taxon>Shewanellaceae</taxon>
        <taxon>Shewanella</taxon>
    </lineage>
</organism>
<name>GRPE_SHESM</name>
<proteinExistence type="inferred from homology"/>
<gene>
    <name evidence="1" type="primary">grpE</name>
    <name type="ordered locus">Shewmr4_2732</name>
</gene>
<sequence>MSNESIKAEQDLIQEGVESEVSTEEASLIDELTQANFRIEELEQLLADALAKVEEQKDSVIRAAAEVDNIRRRAAMDVEKANKFALEKFANELLPVLDNMERALQGTNPQDETTKAIYEGVELTQKSLLTAVAKFGVKPIDPQGQAFNPDQHQAIGMQPSAEFPANTVMLVMQKGYELNSRLLRPAMVMVSQGGPSQEINIEA</sequence>
<evidence type="ECO:0000255" key="1">
    <source>
        <dbReference type="HAMAP-Rule" id="MF_01151"/>
    </source>
</evidence>
<evidence type="ECO:0000256" key="2">
    <source>
        <dbReference type="SAM" id="MobiDB-lite"/>
    </source>
</evidence>
<accession>Q0HGL4</accession>
<feature type="chain" id="PRO_1000137625" description="Protein GrpE">
    <location>
        <begin position="1"/>
        <end position="203"/>
    </location>
</feature>
<feature type="region of interest" description="Disordered" evidence="2">
    <location>
        <begin position="1"/>
        <end position="20"/>
    </location>
</feature>
<feature type="compositionally biased region" description="Basic and acidic residues" evidence="2">
    <location>
        <begin position="1"/>
        <end position="10"/>
    </location>
</feature>